<dbReference type="EMBL" id="X83887">
    <property type="protein sequence ID" value="CAA58764.1"/>
    <property type="molecule type" value="mRNA"/>
</dbReference>
<dbReference type="EMBL" id="FO080489">
    <property type="protein sequence ID" value="CCD64102.1"/>
    <property type="molecule type" value="Genomic_DNA"/>
</dbReference>
<dbReference type="EMBL" id="FO080489">
    <property type="protein sequence ID" value="CCD64103.1"/>
    <property type="molecule type" value="Genomic_DNA"/>
</dbReference>
<dbReference type="EMBL" id="AY523511">
    <property type="protein sequence ID" value="AAR98633.1"/>
    <property type="molecule type" value="mRNA"/>
</dbReference>
<dbReference type="PIR" id="S68588">
    <property type="entry name" value="S68588"/>
</dbReference>
<dbReference type="RefSeq" id="NP_505207.1">
    <molecule id="P48180-1"/>
    <property type="nucleotide sequence ID" value="NM_072806.5"/>
</dbReference>
<dbReference type="SMR" id="P48180"/>
<dbReference type="BioGRID" id="44275">
    <property type="interactions" value="1"/>
</dbReference>
<dbReference type="FunCoup" id="P48180">
    <property type="interactions" value="459"/>
</dbReference>
<dbReference type="STRING" id="6239.F25G6.3.1"/>
<dbReference type="TCDB" id="1.A.9.1.15">
    <property type="family name" value="the neurotransmitter receptor, cys loop, ligand-gated ion channel (lic) family"/>
</dbReference>
<dbReference type="GlyCosmos" id="P48180">
    <property type="glycosylation" value="2 sites, No reported glycans"/>
</dbReference>
<dbReference type="PaxDb" id="6239-F25G6.3a"/>
<dbReference type="EnsemblMetazoa" id="F25G6.3.1">
    <molecule id="P48180-1"/>
    <property type="protein sequence ID" value="F25G6.3.1"/>
    <property type="gene ID" value="WBGene00000055"/>
</dbReference>
<dbReference type="GeneID" id="179235"/>
<dbReference type="KEGG" id="cel:CELE_F25G6.3"/>
<dbReference type="UCSC" id="F25G6.3a.1">
    <property type="organism name" value="c. elegans"/>
</dbReference>
<dbReference type="AGR" id="WB:WBGene00000055"/>
<dbReference type="CTD" id="179235"/>
<dbReference type="WormBase" id="F25G6.3">
    <molecule id="P48180-1"/>
    <property type="protein sequence ID" value="CE09639"/>
    <property type="gene ID" value="WBGene00000055"/>
    <property type="gene designation" value="acr-16"/>
</dbReference>
<dbReference type="eggNOG" id="KOG3646">
    <property type="taxonomic scope" value="Eukaryota"/>
</dbReference>
<dbReference type="HOGENOM" id="CLU_018074_0_3_1"/>
<dbReference type="InParanoid" id="P48180"/>
<dbReference type="OMA" id="NDYNLVW"/>
<dbReference type="OrthoDB" id="5975154at2759"/>
<dbReference type="PhylomeDB" id="P48180"/>
<dbReference type="PRO" id="PR:P48180"/>
<dbReference type="Proteomes" id="UP000001940">
    <property type="component" value="Chromosome V"/>
</dbReference>
<dbReference type="Bgee" id="WBGene00000055">
    <property type="expression patterns" value="Expressed in pharyngeal muscle cell (C elegans) and 3 other cell types or tissues"/>
</dbReference>
<dbReference type="GO" id="GO:0005892">
    <property type="term" value="C:acetylcholine-gated channel complex"/>
    <property type="evidence" value="ECO:0000318"/>
    <property type="project" value="GO_Central"/>
</dbReference>
<dbReference type="GO" id="GO:0042995">
    <property type="term" value="C:cell projection"/>
    <property type="evidence" value="ECO:0000314"/>
    <property type="project" value="WormBase"/>
</dbReference>
<dbReference type="GO" id="GO:0043005">
    <property type="term" value="C:neuron projection"/>
    <property type="evidence" value="ECO:0000318"/>
    <property type="project" value="GO_Central"/>
</dbReference>
<dbReference type="GO" id="GO:0005886">
    <property type="term" value="C:plasma membrane"/>
    <property type="evidence" value="ECO:0000318"/>
    <property type="project" value="GO_Central"/>
</dbReference>
<dbReference type="GO" id="GO:0045211">
    <property type="term" value="C:postsynaptic membrane"/>
    <property type="evidence" value="ECO:0007669"/>
    <property type="project" value="UniProtKB-SubCell"/>
</dbReference>
<dbReference type="GO" id="GO:0045202">
    <property type="term" value="C:synapse"/>
    <property type="evidence" value="ECO:0000318"/>
    <property type="project" value="GO_Central"/>
</dbReference>
<dbReference type="GO" id="GO:0022848">
    <property type="term" value="F:acetylcholine-gated monoatomic cation-selective channel activity"/>
    <property type="evidence" value="ECO:0000314"/>
    <property type="project" value="WormBase"/>
</dbReference>
<dbReference type="GO" id="GO:0005231">
    <property type="term" value="F:excitatory extracellular ligand-gated monoatomic ion channel activity"/>
    <property type="evidence" value="ECO:0000318"/>
    <property type="project" value="GO_Central"/>
</dbReference>
<dbReference type="GO" id="GO:0004888">
    <property type="term" value="F:transmembrane signaling receptor activity"/>
    <property type="evidence" value="ECO:0007669"/>
    <property type="project" value="InterPro"/>
</dbReference>
<dbReference type="GO" id="GO:1904315">
    <property type="term" value="F:transmitter-gated monoatomic ion channel activity involved in regulation of postsynaptic membrane potential"/>
    <property type="evidence" value="ECO:0000318"/>
    <property type="project" value="GO_Central"/>
</dbReference>
<dbReference type="GO" id="GO:0007268">
    <property type="term" value="P:chemical synaptic transmission"/>
    <property type="evidence" value="ECO:0000318"/>
    <property type="project" value="GO_Central"/>
</dbReference>
<dbReference type="GO" id="GO:0034220">
    <property type="term" value="P:monoatomic ion transmembrane transport"/>
    <property type="evidence" value="ECO:0000314"/>
    <property type="project" value="WormBase"/>
</dbReference>
<dbReference type="GO" id="GO:0042391">
    <property type="term" value="P:regulation of membrane potential"/>
    <property type="evidence" value="ECO:0000318"/>
    <property type="project" value="GO_Central"/>
</dbReference>
<dbReference type="CDD" id="cd18997">
    <property type="entry name" value="LGIC_ECD_nAChR"/>
    <property type="match status" value="1"/>
</dbReference>
<dbReference type="CDD" id="cd19051">
    <property type="entry name" value="LGIC_TM_cation"/>
    <property type="match status" value="1"/>
</dbReference>
<dbReference type="FunFam" id="1.20.58.390:FF:000046">
    <property type="entry name" value="AcetylCholine Receptor"/>
    <property type="match status" value="1"/>
</dbReference>
<dbReference type="FunFam" id="1.20.58.390:FF:000159">
    <property type="entry name" value="Acetylcholine receptor subunit alpha-type acr-16"/>
    <property type="match status" value="1"/>
</dbReference>
<dbReference type="FunFam" id="2.70.170.10:FF:000016">
    <property type="entry name" value="Nicotinic acetylcholine receptor subunit"/>
    <property type="match status" value="1"/>
</dbReference>
<dbReference type="Gene3D" id="2.70.170.10">
    <property type="entry name" value="Neurotransmitter-gated ion-channel ligand-binding domain"/>
    <property type="match status" value="1"/>
</dbReference>
<dbReference type="Gene3D" id="1.20.58.390">
    <property type="entry name" value="Neurotransmitter-gated ion-channel transmembrane domain"/>
    <property type="match status" value="2"/>
</dbReference>
<dbReference type="InterPro" id="IPR006202">
    <property type="entry name" value="Neur_chan_lig-bd"/>
</dbReference>
<dbReference type="InterPro" id="IPR036734">
    <property type="entry name" value="Neur_chan_lig-bd_sf"/>
</dbReference>
<dbReference type="InterPro" id="IPR006201">
    <property type="entry name" value="Neur_channel"/>
</dbReference>
<dbReference type="InterPro" id="IPR036719">
    <property type="entry name" value="Neuro-gated_channel_TM_sf"/>
</dbReference>
<dbReference type="InterPro" id="IPR038050">
    <property type="entry name" value="Neuro_actylchol_rec"/>
</dbReference>
<dbReference type="InterPro" id="IPR006029">
    <property type="entry name" value="Neurotrans-gated_channel_TM"/>
</dbReference>
<dbReference type="InterPro" id="IPR018000">
    <property type="entry name" value="Neurotransmitter_ion_chnl_CS"/>
</dbReference>
<dbReference type="InterPro" id="IPR002394">
    <property type="entry name" value="Nicotinic_acetylcholine_rcpt"/>
</dbReference>
<dbReference type="NCBIfam" id="TIGR00860">
    <property type="entry name" value="LIC"/>
    <property type="match status" value="1"/>
</dbReference>
<dbReference type="PANTHER" id="PTHR18945">
    <property type="entry name" value="NEUROTRANSMITTER GATED ION CHANNEL"/>
    <property type="match status" value="1"/>
</dbReference>
<dbReference type="Pfam" id="PF02931">
    <property type="entry name" value="Neur_chan_LBD"/>
    <property type="match status" value="1"/>
</dbReference>
<dbReference type="Pfam" id="PF02932">
    <property type="entry name" value="Neur_chan_memb"/>
    <property type="match status" value="1"/>
</dbReference>
<dbReference type="PRINTS" id="PR00254">
    <property type="entry name" value="NICOTINICR"/>
</dbReference>
<dbReference type="PRINTS" id="PR00252">
    <property type="entry name" value="NRIONCHANNEL"/>
</dbReference>
<dbReference type="SUPFAM" id="SSF90112">
    <property type="entry name" value="Neurotransmitter-gated ion-channel transmembrane pore"/>
    <property type="match status" value="1"/>
</dbReference>
<dbReference type="SUPFAM" id="SSF63712">
    <property type="entry name" value="Nicotinic receptor ligand binding domain-like"/>
    <property type="match status" value="1"/>
</dbReference>
<dbReference type="PROSITE" id="PS00236">
    <property type="entry name" value="NEUROTR_ION_CHANNEL"/>
    <property type="match status" value="1"/>
</dbReference>
<sequence length="498" mass="57169">MSVCTLLISCAILAAPTLGSLQERRLYEDLMRNYNNLERPVANHSEPVTVHLKVALQQIIDVDEKNQVVYVNAWLDYTWNDYNLVWDKAEYGNITDVRFPAGKIWKPDVLLYNSVDTNFDSTYQTNMIVYSTGLVHWVPPGIFKISCKIDIQWFPFDEQKCFFKFGSWTYDGYKLDLQPATGGFDISEYISNGEWALPLTTVERNEKFYDCCPEPYPDVHFYLHMRRRTLYYGFNLIMPCILTTLMTLLGFTLPPDAGEKITLQITVLLSICFFLSIVSEMSPPTSEAVPLLGIFFTCCMIVVTASTVFTVYVLNLHYRTPETHDMGPWTRNLLLYWIPWILRMKRPGHNLTYASLPSLFSTKPNRHSESLIRNIKDNEHSLSRANSFDADCRLNQYIMTQSVSNGLTSLGSIPSTMISSNGTTTDVSQQATLLILHRIYHELKIVTKRMIEGDKEEQACNNWKFAAMVVDRLCLYVFTIFIIVSTIGIFWSAPYLVA</sequence>
<comment type="function">
    <text evidence="1 3 6">After binding acetylcholine, the AChR responds by an extensive change in conformation that affects all subunits and leads to opening of an ion-conducting channel across the plasma membrane (By similarity). A subunit of the levamisole-insensitive nicotinic receptor.</text>
</comment>
<comment type="subcellular location">
    <subcellularLocation>
        <location evidence="4">Postsynaptic cell membrane</location>
        <topology evidence="4">Multi-pass membrane protein</topology>
    </subcellularLocation>
    <subcellularLocation>
        <location evidence="4">Cell membrane</location>
        <topology evidence="4">Multi-pass membrane protein</topology>
    </subcellularLocation>
    <text>The cam-1 protein is required for correct localization.</text>
</comment>
<comment type="alternative products">
    <event type="alternative splicing"/>
    <isoform>
        <id>P48180-1</id>
        <name>a</name>
        <sequence type="displayed"/>
    </isoform>
    <isoform>
        <id>P48180-2</id>
        <name>b</name>
        <sequence type="described" ref="VSP_036472"/>
    </isoform>
</comment>
<comment type="tissue specificity">
    <text evidence="3">Expressed in the body wall muscle.</text>
</comment>
<comment type="disruption phenotype">
    <text evidence="4 5">Uncoordinated movement and reduced body wall muscle currents. These phenotypes are probably related.</text>
</comment>
<comment type="similarity">
    <text evidence="8">Belongs to the ligand-gated ion channel (TC 1.A.9) family. Acetylcholine receptor (TC 1.A.9.1) subfamily.</text>
</comment>
<proteinExistence type="evidence at transcript level"/>
<accession>P48180</accession>
<accession>Q8I932</accession>
<organism>
    <name type="scientific">Caenorhabditis elegans</name>
    <dbReference type="NCBI Taxonomy" id="6239"/>
    <lineage>
        <taxon>Eukaryota</taxon>
        <taxon>Metazoa</taxon>
        <taxon>Ecdysozoa</taxon>
        <taxon>Nematoda</taxon>
        <taxon>Chromadorea</taxon>
        <taxon>Rhabditida</taxon>
        <taxon>Rhabditina</taxon>
        <taxon>Rhabditomorpha</taxon>
        <taxon>Rhabditoidea</taxon>
        <taxon>Rhabditidae</taxon>
        <taxon>Peloderinae</taxon>
        <taxon>Caenorhabditis</taxon>
    </lineage>
</organism>
<gene>
    <name type="primary">acr-16</name>
    <name type="synonym">Ce21</name>
    <name type="ORF">F25G6.3</name>
</gene>
<reference key="1">
    <citation type="journal article" date="1996" name="J. Mol. Biol.">
        <title>Nicotinic acetylcholine receptors in the nematode Caenorhabditis elegans.</title>
        <authorList>
            <person name="Ballivet M."/>
            <person name="Alliod C."/>
            <person name="Bertrand S."/>
            <person name="Bertrand D."/>
        </authorList>
    </citation>
    <scope>NUCLEOTIDE SEQUENCE [MRNA] (ISOFORMS A AND B)</scope>
    <scope>FUNCTION</scope>
    <source>
        <strain>Bristol N2</strain>
    </source>
</reference>
<reference key="2">
    <citation type="journal article" date="1998" name="Science">
        <title>Genome sequence of the nematode C. elegans: a platform for investigating biology.</title>
        <authorList>
            <consortium name="The C. elegans sequencing consortium"/>
        </authorList>
    </citation>
    <scope>NUCLEOTIDE SEQUENCE [LARGE SCALE GENOMIC DNA]</scope>
    <scope>ALTERNATIVE SPLICING</scope>
    <source>
        <strain>Bristol N2</strain>
    </source>
</reference>
<reference key="3">
    <citation type="submission" date="2004-01" db="EMBL/GenBank/DDBJ databases">
        <title>The Caenorhabditis elegans transcriptome project, a complementary view of the genome.</title>
        <authorList>
            <person name="Kohara Y."/>
            <person name="Shin-i T."/>
            <person name="Suzuki Y."/>
            <person name="Sugano S."/>
            <person name="Thierry-Mieg D."/>
            <person name="Thierry-Mieg J."/>
        </authorList>
    </citation>
    <scope>NUCLEOTIDE SEQUENCE [LARGE SCALE MRNA] (ISOFORM A)</scope>
    <source>
        <strain>Bristol N2</strain>
    </source>
</reference>
<reference key="4">
    <citation type="journal article" date="2005" name="J. Biol. Chem.">
        <title>acr-16 encodes an essential subunit of the levamisole-resistant nicotinic receptor at the Caenorhabditis elegans neuromuscular junction.</title>
        <authorList>
            <person name="Touroutine D."/>
            <person name="Fox R.M."/>
            <person name="Von Stetina S.E."/>
            <person name="Burdina A."/>
            <person name="Miller D.M. III"/>
            <person name="Richmond J.E."/>
        </authorList>
    </citation>
    <scope>FUNCTION</scope>
    <scope>TISSUE SPECIFICITY</scope>
</reference>
<reference key="5">
    <citation type="journal article" date="2005" name="Neuron">
        <title>The Ror receptor tyrosine kinase CAM-1 is required for ACR-16-mediated synaptic transmission at the C. elegans neuromuscular junction.</title>
        <authorList>
            <person name="Francis M.M."/>
            <person name="Evans S.P."/>
            <person name="Jensen M."/>
            <person name="Madsen D.M."/>
            <person name="Mancuso J."/>
            <person name="Norman K.R."/>
            <person name="Maricq A.V."/>
        </authorList>
    </citation>
    <scope>SUBCELLULAR LOCATION</scope>
    <scope>DISRUPTION PHENOTYPE</scope>
</reference>
<reference key="6">
    <citation type="journal article" date="2007" name="Nat. Neurosci.">
        <title>PKC-1 regulates secretion of neuropeptides.</title>
        <authorList>
            <person name="Sieburth D."/>
            <person name="Madison J.M."/>
            <person name="Kaplan J.M."/>
        </authorList>
    </citation>
    <scope>DISRUPTION PHENOTYPE</scope>
</reference>
<protein>
    <recommendedName>
        <fullName>Acetylcholine receptor subunit alpha-type acr-16</fullName>
    </recommendedName>
</protein>
<feature type="signal peptide" evidence="2">
    <location>
        <begin position="1"/>
        <end position="19"/>
    </location>
</feature>
<feature type="chain" id="PRO_0000000395" description="Acetylcholine receptor subunit alpha-type acr-16">
    <location>
        <begin position="20"/>
        <end position="498"/>
    </location>
</feature>
<feature type="topological domain" description="Extracellular" evidence="2">
    <location>
        <begin position="20"/>
        <end position="230"/>
    </location>
</feature>
<feature type="transmembrane region" description="Helical" evidence="2">
    <location>
        <begin position="231"/>
        <end position="252"/>
    </location>
</feature>
<feature type="transmembrane region" description="Helical" evidence="2">
    <location>
        <begin position="261"/>
        <end position="279"/>
    </location>
</feature>
<feature type="transmembrane region" description="Helical" evidence="2">
    <location>
        <begin position="295"/>
        <end position="314"/>
    </location>
</feature>
<feature type="topological domain" description="Cytoplasmic" evidence="2">
    <location>
        <begin position="315"/>
        <end position="472"/>
    </location>
</feature>
<feature type="transmembrane region" description="Helical" evidence="2">
    <location>
        <begin position="473"/>
        <end position="493"/>
    </location>
</feature>
<feature type="glycosylation site" description="N-linked (GlcNAc...) asparagine" evidence="2">
    <location>
        <position position="43"/>
    </location>
</feature>
<feature type="glycosylation site" description="N-linked (GlcNAc...) asparagine" evidence="2">
    <location>
        <position position="93"/>
    </location>
</feature>
<feature type="disulfide bond" evidence="1">
    <location>
        <begin position="147"/>
        <end position="161"/>
    </location>
</feature>
<feature type="disulfide bond" description="Associated with receptor activation" evidence="1">
    <location>
        <begin position="211"/>
        <end position="212"/>
    </location>
</feature>
<feature type="splice variant" id="VSP_036472" description="In isoform b." evidence="7">
    <original>VDRLCLYVFTI</original>
    <variation>RTYISRKIENF</variation>
    <location>
        <begin position="470"/>
        <end position="480"/>
    </location>
</feature>
<evidence type="ECO:0000250" key="1"/>
<evidence type="ECO:0000255" key="2"/>
<evidence type="ECO:0000269" key="3">
    <source>
    </source>
</evidence>
<evidence type="ECO:0000269" key="4">
    <source>
    </source>
</evidence>
<evidence type="ECO:0000269" key="5">
    <source>
    </source>
</evidence>
<evidence type="ECO:0000269" key="6">
    <source>
    </source>
</evidence>
<evidence type="ECO:0000303" key="7">
    <source>
    </source>
</evidence>
<evidence type="ECO:0000305" key="8"/>
<name>ACH1_CAEEL</name>
<keyword id="KW-0025">Alternative splicing</keyword>
<keyword id="KW-1003">Cell membrane</keyword>
<keyword id="KW-1015">Disulfide bond</keyword>
<keyword id="KW-0325">Glycoprotein</keyword>
<keyword id="KW-0407">Ion channel</keyword>
<keyword id="KW-0406">Ion transport</keyword>
<keyword id="KW-1071">Ligand-gated ion channel</keyword>
<keyword id="KW-0472">Membrane</keyword>
<keyword id="KW-0628">Postsynaptic cell membrane</keyword>
<keyword id="KW-0675">Receptor</keyword>
<keyword id="KW-1185">Reference proteome</keyword>
<keyword id="KW-0732">Signal</keyword>
<keyword id="KW-0770">Synapse</keyword>
<keyword id="KW-0812">Transmembrane</keyword>
<keyword id="KW-1133">Transmembrane helix</keyword>
<keyword id="KW-0813">Transport</keyword>